<organism>
    <name type="scientific">Vipera aspis aspis</name>
    <name type="common">Aspic viper</name>
    <dbReference type="NCBI Taxonomy" id="194601"/>
    <lineage>
        <taxon>Eukaryota</taxon>
        <taxon>Metazoa</taxon>
        <taxon>Chordata</taxon>
        <taxon>Craniata</taxon>
        <taxon>Vertebrata</taxon>
        <taxon>Euteleostomi</taxon>
        <taxon>Lepidosauria</taxon>
        <taxon>Squamata</taxon>
        <taxon>Bifurcata</taxon>
        <taxon>Unidentata</taxon>
        <taxon>Episquamata</taxon>
        <taxon>Toxicofera</taxon>
        <taxon>Serpentes</taxon>
        <taxon>Colubroidea</taxon>
        <taxon>Viperidae</taxon>
        <taxon>Viperinae</taxon>
        <taxon>Vipera</taxon>
    </lineage>
</organism>
<proteinExistence type="evidence at transcript level"/>
<protein>
    <recommendedName>
        <fullName>Basic phospholipase A2 vaspin B chain</fullName>
        <shortName>svPLA2</shortName>
        <ecNumber>3.1.1.4</ecNumber>
    </recommendedName>
    <alternativeName>
        <fullName>Phosphatidylcholine 2-acylhydrolase</fullName>
    </alternativeName>
    <alternativeName>
        <fullName>Vaspin toxic component</fullName>
    </alternativeName>
</protein>
<keyword id="KW-0106">Calcium</keyword>
<keyword id="KW-1015">Disulfide bond</keyword>
<keyword id="KW-0378">Hydrolase</keyword>
<keyword id="KW-0442">Lipid degradation</keyword>
<keyword id="KW-0443">Lipid metabolism</keyword>
<keyword id="KW-0479">Metal-binding</keyword>
<keyword id="KW-0528">Neurotoxin</keyword>
<keyword id="KW-0629">Postsynaptic neurotoxin</keyword>
<keyword id="KW-0638">Presynaptic neurotoxin</keyword>
<keyword id="KW-0964">Secreted</keyword>
<keyword id="KW-0732">Signal</keyword>
<keyword id="KW-0800">Toxin</keyword>
<comment type="function">
    <text evidence="1">Heterodimer: postsynaptic neurotoxin.</text>
</comment>
<comment type="function">
    <text evidence="1">Monomer: snake venom phospholipase A2 (PLA2) that shows postsynaptic neurotoxicity. PLA2 catalyzes the calcium-dependent hydrolysis of the 2-acyl groups in 3-sn-phosphoglycerides (By similarity).</text>
</comment>
<comment type="catalytic activity">
    <reaction evidence="2 3">
        <text>a 1,2-diacyl-sn-glycero-3-phosphocholine + H2O = a 1-acyl-sn-glycero-3-phosphocholine + a fatty acid + H(+)</text>
        <dbReference type="Rhea" id="RHEA:15801"/>
        <dbReference type="ChEBI" id="CHEBI:15377"/>
        <dbReference type="ChEBI" id="CHEBI:15378"/>
        <dbReference type="ChEBI" id="CHEBI:28868"/>
        <dbReference type="ChEBI" id="CHEBI:57643"/>
        <dbReference type="ChEBI" id="CHEBI:58168"/>
        <dbReference type="EC" id="3.1.1.4"/>
    </reaction>
</comment>
<comment type="cofactor">
    <cofactor evidence="1">
        <name>Ca(2+)</name>
        <dbReference type="ChEBI" id="CHEBI:29108"/>
    </cofactor>
    <text evidence="1">Binds 1 Ca(2+) ion.</text>
</comment>
<comment type="subunit">
    <text>Heterodimer of a weakly toxic basic protein having phospholipase A2 activity (B chain (AC Q8JFG1)) and a non-toxic acidic protein functioning as its inhibitor (A chain).</text>
</comment>
<comment type="subcellular location">
    <subcellularLocation>
        <location evidence="1">Secreted</location>
    </subcellularLocation>
</comment>
<comment type="tissue specificity">
    <text>Expressed by the venom gland.</text>
</comment>
<comment type="similarity">
    <text evidence="4">Belongs to the phospholipase A2 family. Group II subfamily. D49 sub-subfamily.</text>
</comment>
<dbReference type="EC" id="3.1.1.4"/>
<dbReference type="EMBL" id="AJ459807">
    <property type="protein sequence ID" value="CAD30850.1"/>
    <property type="molecule type" value="mRNA"/>
</dbReference>
<dbReference type="EMBL" id="AY243576">
    <property type="protein sequence ID" value="AAO86504.1"/>
    <property type="molecule type" value="Genomic_DNA"/>
</dbReference>
<dbReference type="EMBL" id="AJ580280">
    <property type="protein sequence ID" value="CAE47285.1"/>
    <property type="molecule type" value="mRNA"/>
</dbReference>
<dbReference type="EMBL" id="AJ580281">
    <property type="protein sequence ID" value="CAE47286.1"/>
    <property type="molecule type" value="mRNA"/>
</dbReference>
<dbReference type="EMBL" id="AJ580283">
    <property type="protein sequence ID" value="CAE47288.1"/>
    <property type="molecule type" value="mRNA"/>
</dbReference>
<dbReference type="EMBL" id="AJ580284">
    <property type="protein sequence ID" value="CAE47289.1"/>
    <property type="molecule type" value="mRNA"/>
</dbReference>
<dbReference type="EMBL" id="AJ580285">
    <property type="protein sequence ID" value="CAE47290.1"/>
    <property type="molecule type" value="mRNA"/>
</dbReference>
<dbReference type="EMBL" id="AJ580293">
    <property type="protein sequence ID" value="CAE47298.1"/>
    <property type="molecule type" value="mRNA"/>
</dbReference>
<dbReference type="SMR" id="Q8JFG0"/>
<dbReference type="GO" id="GO:0005576">
    <property type="term" value="C:extracellular region"/>
    <property type="evidence" value="ECO:0007669"/>
    <property type="project" value="UniProtKB-SubCell"/>
</dbReference>
<dbReference type="GO" id="GO:0005509">
    <property type="term" value="F:calcium ion binding"/>
    <property type="evidence" value="ECO:0007669"/>
    <property type="project" value="InterPro"/>
</dbReference>
<dbReference type="GO" id="GO:0047498">
    <property type="term" value="F:calcium-dependent phospholipase A2 activity"/>
    <property type="evidence" value="ECO:0007669"/>
    <property type="project" value="TreeGrafter"/>
</dbReference>
<dbReference type="GO" id="GO:0005543">
    <property type="term" value="F:phospholipid binding"/>
    <property type="evidence" value="ECO:0007669"/>
    <property type="project" value="TreeGrafter"/>
</dbReference>
<dbReference type="GO" id="GO:0090729">
    <property type="term" value="F:toxin activity"/>
    <property type="evidence" value="ECO:0007669"/>
    <property type="project" value="UniProtKB-KW"/>
</dbReference>
<dbReference type="GO" id="GO:0050482">
    <property type="term" value="P:arachidonate secretion"/>
    <property type="evidence" value="ECO:0007669"/>
    <property type="project" value="InterPro"/>
</dbReference>
<dbReference type="GO" id="GO:0016042">
    <property type="term" value="P:lipid catabolic process"/>
    <property type="evidence" value="ECO:0007669"/>
    <property type="project" value="UniProtKB-KW"/>
</dbReference>
<dbReference type="GO" id="GO:0042130">
    <property type="term" value="P:negative regulation of T cell proliferation"/>
    <property type="evidence" value="ECO:0007669"/>
    <property type="project" value="TreeGrafter"/>
</dbReference>
<dbReference type="GO" id="GO:0006644">
    <property type="term" value="P:phospholipid metabolic process"/>
    <property type="evidence" value="ECO:0007669"/>
    <property type="project" value="InterPro"/>
</dbReference>
<dbReference type="CDD" id="cd00125">
    <property type="entry name" value="PLA2c"/>
    <property type="match status" value="1"/>
</dbReference>
<dbReference type="FunFam" id="1.20.90.10:FF:000001">
    <property type="entry name" value="Basic phospholipase A2 homolog"/>
    <property type="match status" value="1"/>
</dbReference>
<dbReference type="Gene3D" id="1.20.90.10">
    <property type="entry name" value="Phospholipase A2 domain"/>
    <property type="match status" value="1"/>
</dbReference>
<dbReference type="InterPro" id="IPR001211">
    <property type="entry name" value="PLipase_A2"/>
</dbReference>
<dbReference type="InterPro" id="IPR033112">
    <property type="entry name" value="PLipase_A2_Asp_AS"/>
</dbReference>
<dbReference type="InterPro" id="IPR016090">
    <property type="entry name" value="PLipase_A2_dom"/>
</dbReference>
<dbReference type="InterPro" id="IPR036444">
    <property type="entry name" value="PLipase_A2_dom_sf"/>
</dbReference>
<dbReference type="InterPro" id="IPR033113">
    <property type="entry name" value="PLipase_A2_His_AS"/>
</dbReference>
<dbReference type="PANTHER" id="PTHR11716">
    <property type="entry name" value="PHOSPHOLIPASE A2 FAMILY MEMBER"/>
    <property type="match status" value="1"/>
</dbReference>
<dbReference type="PANTHER" id="PTHR11716:SF9">
    <property type="entry name" value="PHOSPHOLIPASE A2, MEMBRANE ASSOCIATED"/>
    <property type="match status" value="1"/>
</dbReference>
<dbReference type="Pfam" id="PF00068">
    <property type="entry name" value="Phospholip_A2_1"/>
    <property type="match status" value="1"/>
</dbReference>
<dbReference type="PRINTS" id="PR00389">
    <property type="entry name" value="PHPHLIPASEA2"/>
</dbReference>
<dbReference type="SMART" id="SM00085">
    <property type="entry name" value="PA2c"/>
    <property type="match status" value="1"/>
</dbReference>
<dbReference type="SUPFAM" id="SSF48619">
    <property type="entry name" value="Phospholipase A2, PLA2"/>
    <property type="match status" value="1"/>
</dbReference>
<dbReference type="PROSITE" id="PS00119">
    <property type="entry name" value="PA2_ASP"/>
    <property type="match status" value="1"/>
</dbReference>
<dbReference type="PROSITE" id="PS00118">
    <property type="entry name" value="PA2_HIS"/>
    <property type="match status" value="1"/>
</dbReference>
<feature type="signal peptide" evidence="1">
    <location>
        <begin position="1"/>
        <end position="16"/>
    </location>
</feature>
<feature type="chain" id="PRO_0000022968" description="Basic phospholipase A2 vaspin B chain">
    <location>
        <begin position="17"/>
        <end position="138"/>
    </location>
</feature>
<feature type="active site" evidence="1">
    <location>
        <position position="63"/>
    </location>
</feature>
<feature type="active site" evidence="1">
    <location>
        <position position="105"/>
    </location>
</feature>
<feature type="binding site" evidence="1">
    <location>
        <position position="43"/>
    </location>
    <ligand>
        <name>Ca(2+)</name>
        <dbReference type="ChEBI" id="CHEBI:29108"/>
    </ligand>
</feature>
<feature type="binding site" evidence="1">
    <location>
        <position position="45"/>
    </location>
    <ligand>
        <name>Ca(2+)</name>
        <dbReference type="ChEBI" id="CHEBI:29108"/>
    </ligand>
</feature>
<feature type="binding site" evidence="1">
    <location>
        <position position="47"/>
    </location>
    <ligand>
        <name>Ca(2+)</name>
        <dbReference type="ChEBI" id="CHEBI:29108"/>
    </ligand>
</feature>
<feature type="binding site" evidence="1">
    <location>
        <position position="64"/>
    </location>
    <ligand>
        <name>Ca(2+)</name>
        <dbReference type="ChEBI" id="CHEBI:29108"/>
    </ligand>
</feature>
<feature type="disulfide bond" evidence="1">
    <location>
        <begin position="42"/>
        <end position="131"/>
    </location>
</feature>
<feature type="disulfide bond" evidence="1">
    <location>
        <begin position="44"/>
        <end position="60"/>
    </location>
</feature>
<feature type="disulfide bond" evidence="1">
    <location>
        <begin position="59"/>
        <end position="111"/>
    </location>
</feature>
<feature type="disulfide bond" evidence="1">
    <location>
        <begin position="65"/>
        <end position="138"/>
    </location>
</feature>
<feature type="disulfide bond" evidence="1">
    <location>
        <begin position="66"/>
        <end position="104"/>
    </location>
</feature>
<feature type="disulfide bond" evidence="1">
    <location>
        <begin position="73"/>
        <end position="97"/>
    </location>
</feature>
<feature type="disulfide bond" evidence="1">
    <location>
        <begin position="91"/>
        <end position="102"/>
    </location>
</feature>
<sequence length="138" mass="15610">MRILWIVAVCLIGVEGNLFQFAKMINGKLGAFSVWNYISYGCYCGWGGQGTPKDATDRCCFVHDCCYGRVRGCNPKLAIYSYSFKKGNIVCGKNNGCLRDICECDRVAANCFHQNKNTYNKNYRFLSSSRCRQTSEQC</sequence>
<reference key="1">
    <citation type="journal article" date="2002" name="FEBS Lett.">
        <title>Toxicity evolution of Vipera aspis aspis venom: identification and molecular modeling of a novel phospholipase A(2) heterodimer neurotoxin.</title>
        <authorList>
            <person name="Jan V."/>
            <person name="Maroun R.C."/>
            <person name="Robbe-Vincent A."/>
            <person name="De Haro L."/>
            <person name="Choumet V."/>
        </authorList>
    </citation>
    <scope>NUCLEOTIDE SEQUENCE [MRNA]</scope>
    <source>
        <tissue>Venom gland</tissue>
    </source>
</reference>
<reference key="2">
    <citation type="journal article" date="2003" name="Eur. J. Biochem.">
        <title>Sequences and structural organization of phospholipase A2 genes from Vipera aspis aspis, V. aspis zinnikeri and Vipera berus berus venom. Identification of the origin of a new viper population based on ammodytin I1 heterogeneity.</title>
        <authorList>
            <person name="Guillemin I."/>
            <person name="Bouchier C."/>
            <person name="Garrigues T."/>
            <person name="Wisner A."/>
            <person name="Choumet V."/>
        </authorList>
    </citation>
    <scope>NUCLEOTIDE SEQUENCE [GENOMIC DNA]</scope>
    <source>
        <tissue>Liver</tissue>
    </source>
</reference>
<reference key="3">
    <citation type="journal article" date="2007" name="Toxicon">
        <title>Phospholipase A2 diversity and polymorphism in European viper venoms: paradoxical molecular evolution in Viperinae.</title>
        <authorList>
            <person name="Jan V.M."/>
            <person name="Guillemin I."/>
            <person name="Robbe-Vincent A."/>
            <person name="Choumet V."/>
        </authorList>
    </citation>
    <scope>NUCLEOTIDE SEQUENCE [MRNA]</scope>
    <source>
        <tissue>Venom gland</tissue>
    </source>
</reference>
<accession>Q8JFG0</accession>
<accession>Q6A358</accession>
<evidence type="ECO:0000250" key="1"/>
<evidence type="ECO:0000255" key="2">
    <source>
        <dbReference type="PROSITE-ProRule" id="PRU10035"/>
    </source>
</evidence>
<evidence type="ECO:0000255" key="3">
    <source>
        <dbReference type="PROSITE-ProRule" id="PRU10036"/>
    </source>
</evidence>
<evidence type="ECO:0000305" key="4"/>
<name>PA2B_VIPAP</name>